<protein>
    <recommendedName>
        <fullName evidence="1">Probable cytosol aminopeptidase</fullName>
        <ecNumber evidence="1">3.4.11.1</ecNumber>
    </recommendedName>
    <alternativeName>
        <fullName evidence="1">Leucine aminopeptidase</fullName>
        <shortName evidence="1">LAP</shortName>
        <ecNumber evidence="1">3.4.11.10</ecNumber>
    </alternativeName>
    <alternativeName>
        <fullName evidence="1">Leucyl aminopeptidase</fullName>
    </alternativeName>
</protein>
<comment type="function">
    <text evidence="1">Presumably involved in the processing and regular turnover of intracellular proteins. Catalyzes the removal of unsubstituted N-terminal amino acids from various peptides.</text>
</comment>
<comment type="catalytic activity">
    <reaction evidence="1">
        <text>Release of an N-terminal amino acid, Xaa-|-Yaa-, in which Xaa is preferably Leu, but may be other amino acids including Pro although not Arg or Lys, and Yaa may be Pro. Amino acid amides and methyl esters are also readily hydrolyzed, but rates on arylamides are exceedingly low.</text>
        <dbReference type="EC" id="3.4.11.1"/>
    </reaction>
</comment>
<comment type="catalytic activity">
    <reaction evidence="1">
        <text>Release of an N-terminal amino acid, preferentially leucine, but not glutamic or aspartic acids.</text>
        <dbReference type="EC" id="3.4.11.10"/>
    </reaction>
</comment>
<comment type="cofactor">
    <cofactor evidence="1">
        <name>Mn(2+)</name>
        <dbReference type="ChEBI" id="CHEBI:29035"/>
    </cofactor>
    <text evidence="1">Binds 2 manganese ions per subunit.</text>
</comment>
<comment type="subcellular location">
    <subcellularLocation>
        <location evidence="1">Cytoplasm</location>
    </subcellularLocation>
</comment>
<comment type="similarity">
    <text evidence="1">Belongs to the peptidase M17 family.</text>
</comment>
<reference key="1">
    <citation type="journal article" date="2011" name="J. Bacteriol.">
        <title>Comparative genomics of 28 Salmonella enterica isolates: evidence for CRISPR-mediated adaptive sublineage evolution.</title>
        <authorList>
            <person name="Fricke W.F."/>
            <person name="Mammel M.K."/>
            <person name="McDermott P.F."/>
            <person name="Tartera C."/>
            <person name="White D.G."/>
            <person name="Leclerc J.E."/>
            <person name="Ravel J."/>
            <person name="Cebula T.A."/>
        </authorList>
    </citation>
    <scope>NUCLEOTIDE SEQUENCE [LARGE SCALE GENOMIC DNA]</scope>
    <source>
        <strain>CVM19633</strain>
    </source>
</reference>
<dbReference type="EC" id="3.4.11.1" evidence="1"/>
<dbReference type="EC" id="3.4.11.10" evidence="1"/>
<dbReference type="EMBL" id="CP001127">
    <property type="protein sequence ID" value="ACF91788.1"/>
    <property type="molecule type" value="Genomic_DNA"/>
</dbReference>
<dbReference type="RefSeq" id="WP_000397158.1">
    <property type="nucleotide sequence ID" value="NC_011094.1"/>
</dbReference>
<dbReference type="SMR" id="B4TTA0"/>
<dbReference type="MEROPS" id="M17.003"/>
<dbReference type="KEGG" id="sew:SeSA_A4733"/>
<dbReference type="HOGENOM" id="CLU_013734_2_2_6"/>
<dbReference type="Proteomes" id="UP000001865">
    <property type="component" value="Chromosome"/>
</dbReference>
<dbReference type="GO" id="GO:0005737">
    <property type="term" value="C:cytoplasm"/>
    <property type="evidence" value="ECO:0007669"/>
    <property type="project" value="UniProtKB-SubCell"/>
</dbReference>
<dbReference type="GO" id="GO:0030145">
    <property type="term" value="F:manganese ion binding"/>
    <property type="evidence" value="ECO:0007669"/>
    <property type="project" value="UniProtKB-UniRule"/>
</dbReference>
<dbReference type="GO" id="GO:0070006">
    <property type="term" value="F:metalloaminopeptidase activity"/>
    <property type="evidence" value="ECO:0007669"/>
    <property type="project" value="InterPro"/>
</dbReference>
<dbReference type="GO" id="GO:0006508">
    <property type="term" value="P:proteolysis"/>
    <property type="evidence" value="ECO:0007669"/>
    <property type="project" value="UniProtKB-KW"/>
</dbReference>
<dbReference type="CDD" id="cd00433">
    <property type="entry name" value="Peptidase_M17"/>
    <property type="match status" value="1"/>
</dbReference>
<dbReference type="FunFam" id="3.40.220.10:FF:000001">
    <property type="entry name" value="Probable cytosol aminopeptidase"/>
    <property type="match status" value="1"/>
</dbReference>
<dbReference type="FunFam" id="3.40.630.10:FF:000004">
    <property type="entry name" value="Probable cytosol aminopeptidase"/>
    <property type="match status" value="1"/>
</dbReference>
<dbReference type="Gene3D" id="3.40.220.10">
    <property type="entry name" value="Leucine Aminopeptidase, subunit E, domain 1"/>
    <property type="match status" value="1"/>
</dbReference>
<dbReference type="Gene3D" id="3.40.630.10">
    <property type="entry name" value="Zn peptidases"/>
    <property type="match status" value="1"/>
</dbReference>
<dbReference type="HAMAP" id="MF_00181">
    <property type="entry name" value="Cytosol_peptidase_M17"/>
    <property type="match status" value="1"/>
</dbReference>
<dbReference type="InterPro" id="IPR011356">
    <property type="entry name" value="Leucine_aapep/pepB"/>
</dbReference>
<dbReference type="InterPro" id="IPR043472">
    <property type="entry name" value="Macro_dom-like"/>
</dbReference>
<dbReference type="InterPro" id="IPR000819">
    <property type="entry name" value="Peptidase_M17_C"/>
</dbReference>
<dbReference type="InterPro" id="IPR023042">
    <property type="entry name" value="Peptidase_M17_leu_NH2_pept"/>
</dbReference>
<dbReference type="InterPro" id="IPR008283">
    <property type="entry name" value="Peptidase_M17_N"/>
</dbReference>
<dbReference type="NCBIfam" id="NF002072">
    <property type="entry name" value="PRK00913.1-1"/>
    <property type="match status" value="1"/>
</dbReference>
<dbReference type="NCBIfam" id="NF002073">
    <property type="entry name" value="PRK00913.1-2"/>
    <property type="match status" value="1"/>
</dbReference>
<dbReference type="NCBIfam" id="NF002074">
    <property type="entry name" value="PRK00913.1-4"/>
    <property type="match status" value="1"/>
</dbReference>
<dbReference type="PANTHER" id="PTHR11963:SF23">
    <property type="entry name" value="CYTOSOL AMINOPEPTIDASE"/>
    <property type="match status" value="1"/>
</dbReference>
<dbReference type="PANTHER" id="PTHR11963">
    <property type="entry name" value="LEUCINE AMINOPEPTIDASE-RELATED"/>
    <property type="match status" value="1"/>
</dbReference>
<dbReference type="Pfam" id="PF00883">
    <property type="entry name" value="Peptidase_M17"/>
    <property type="match status" value="1"/>
</dbReference>
<dbReference type="Pfam" id="PF02789">
    <property type="entry name" value="Peptidase_M17_N"/>
    <property type="match status" value="1"/>
</dbReference>
<dbReference type="PRINTS" id="PR00481">
    <property type="entry name" value="LAMNOPPTDASE"/>
</dbReference>
<dbReference type="SUPFAM" id="SSF52949">
    <property type="entry name" value="Macro domain-like"/>
    <property type="match status" value="1"/>
</dbReference>
<dbReference type="SUPFAM" id="SSF53187">
    <property type="entry name" value="Zn-dependent exopeptidases"/>
    <property type="match status" value="1"/>
</dbReference>
<dbReference type="PROSITE" id="PS00631">
    <property type="entry name" value="CYTOSOL_AP"/>
    <property type="match status" value="1"/>
</dbReference>
<keyword id="KW-0031">Aminopeptidase</keyword>
<keyword id="KW-0963">Cytoplasm</keyword>
<keyword id="KW-0378">Hydrolase</keyword>
<keyword id="KW-0464">Manganese</keyword>
<keyword id="KW-0479">Metal-binding</keyword>
<keyword id="KW-0645">Protease</keyword>
<accession>B4TTA0</accession>
<feature type="chain" id="PRO_1000098350" description="Probable cytosol aminopeptidase">
    <location>
        <begin position="1"/>
        <end position="503"/>
    </location>
</feature>
<feature type="active site" evidence="1">
    <location>
        <position position="282"/>
    </location>
</feature>
<feature type="active site" evidence="1">
    <location>
        <position position="356"/>
    </location>
</feature>
<feature type="binding site" evidence="1">
    <location>
        <position position="270"/>
    </location>
    <ligand>
        <name>Mn(2+)</name>
        <dbReference type="ChEBI" id="CHEBI:29035"/>
        <label>2</label>
    </ligand>
</feature>
<feature type="binding site" evidence="1">
    <location>
        <position position="275"/>
    </location>
    <ligand>
        <name>Mn(2+)</name>
        <dbReference type="ChEBI" id="CHEBI:29035"/>
        <label>1</label>
    </ligand>
</feature>
<feature type="binding site" evidence="1">
    <location>
        <position position="275"/>
    </location>
    <ligand>
        <name>Mn(2+)</name>
        <dbReference type="ChEBI" id="CHEBI:29035"/>
        <label>2</label>
    </ligand>
</feature>
<feature type="binding site" evidence="1">
    <location>
        <position position="293"/>
    </location>
    <ligand>
        <name>Mn(2+)</name>
        <dbReference type="ChEBI" id="CHEBI:29035"/>
        <label>2</label>
    </ligand>
</feature>
<feature type="binding site" evidence="1">
    <location>
        <position position="352"/>
    </location>
    <ligand>
        <name>Mn(2+)</name>
        <dbReference type="ChEBI" id="CHEBI:29035"/>
        <label>1</label>
    </ligand>
</feature>
<feature type="binding site" evidence="1">
    <location>
        <position position="354"/>
    </location>
    <ligand>
        <name>Mn(2+)</name>
        <dbReference type="ChEBI" id="CHEBI:29035"/>
        <label>1</label>
    </ligand>
</feature>
<feature type="binding site" evidence="1">
    <location>
        <position position="354"/>
    </location>
    <ligand>
        <name>Mn(2+)</name>
        <dbReference type="ChEBI" id="CHEBI:29035"/>
        <label>2</label>
    </ligand>
</feature>
<proteinExistence type="inferred from homology"/>
<evidence type="ECO:0000255" key="1">
    <source>
        <dbReference type="HAMAP-Rule" id="MF_00181"/>
    </source>
</evidence>
<name>AMPA_SALSV</name>
<sequence length="503" mass="54890">MEFSVKSGSPEKQRSACIVVGVFEPRRLSPIAEQLDKISDGYISALLRRGELEGKPGQTLLLHHVPNVLSERILLIGCGKERELDERQYKQVIQKTINTLNDTGSMEAVCFLTELHVKGRNNYWKVRQAVETAKETLYSFDQLKTNKSEPRRPLRKMVFNVPTRRELTSGERAIQHGLAIAAGIKAAKDLGNMPPNICNAAYLASQARQLADSYSKNVITRVIGEQQMRELGMNAYLAVGHGSQNESLMSVIEYKGNPSEDARPIVLVGKGLTFDSGGISIKPSEGMDEMKYDMCGAAAVYGVMRMVAELQLPINVIGVLAGCENMPGGRAYRPGDVLTTMSGQTVEVLNTDAEGRLVLCDVLTYVERFEPEAVIDVATLTGACVIALGHHITGLMSNHNPLAHELIGASEQAGDRAWRLPLGDEFQEQLESNFADMANIGGRPGGAITAGCFLSRFTRKYNWAHLDIAGTAWRSGKAKGATGRPVALLSQFLLNRAGFNGEE</sequence>
<organism>
    <name type="scientific">Salmonella schwarzengrund (strain CVM19633)</name>
    <dbReference type="NCBI Taxonomy" id="439843"/>
    <lineage>
        <taxon>Bacteria</taxon>
        <taxon>Pseudomonadati</taxon>
        <taxon>Pseudomonadota</taxon>
        <taxon>Gammaproteobacteria</taxon>
        <taxon>Enterobacterales</taxon>
        <taxon>Enterobacteriaceae</taxon>
        <taxon>Salmonella</taxon>
    </lineage>
</organism>
<gene>
    <name evidence="1" type="primary">pepA</name>
    <name type="ordered locus">SeSA_A4733</name>
</gene>